<sequence length="426" mass="48445">MLDIKLIRKAPEECETRLRKKDPSISLLPILNLDKEVRQLKTDSESLQSQKKLLSRQIHQTKARNEDASDMIGEVERISQELTRLEALLEEKDAALQNLLVRLPNYPDEDVPISPDKTGNRVIKSVGSPSTFSFPPKHHLELNQKLQILDFKLPGKTSGSGWPAYKNRGVLLEWALLTYLLQKQQSHGFQLWLPPLLVKREILFGSGQIPKFDGQYYRVEDGDQSLYLIPTAEVVLNGFHSQEIFNEKDLPIYYAACTPCFRREAGAAGAHERGLVRVHQFHKVEMFAFTTPEQADQAYEKMLSIVEEILTELKLPYRLSLLSTGDMSFTASKTIDAEVWLPGQKSYYEVSSISQCTDFQSRRSETRYKDSQGKMHFVHTLNGSGLATPRLFVAILENNQQEDGSVIIPEVLRPYLGNQEVLSAQE</sequence>
<comment type="function">
    <text evidence="1">Catalyzes the attachment of serine to tRNA(Ser). Is also able to aminoacylate tRNA(Sec) with serine, to form the misacylated tRNA L-seryl-tRNA(Sec), which will be further converted into selenocysteinyl-tRNA(Sec).</text>
</comment>
<comment type="catalytic activity">
    <reaction evidence="1">
        <text>tRNA(Ser) + L-serine + ATP = L-seryl-tRNA(Ser) + AMP + diphosphate + H(+)</text>
        <dbReference type="Rhea" id="RHEA:12292"/>
        <dbReference type="Rhea" id="RHEA-COMP:9669"/>
        <dbReference type="Rhea" id="RHEA-COMP:9703"/>
        <dbReference type="ChEBI" id="CHEBI:15378"/>
        <dbReference type="ChEBI" id="CHEBI:30616"/>
        <dbReference type="ChEBI" id="CHEBI:33019"/>
        <dbReference type="ChEBI" id="CHEBI:33384"/>
        <dbReference type="ChEBI" id="CHEBI:78442"/>
        <dbReference type="ChEBI" id="CHEBI:78533"/>
        <dbReference type="ChEBI" id="CHEBI:456215"/>
        <dbReference type="EC" id="6.1.1.11"/>
    </reaction>
</comment>
<comment type="catalytic activity">
    <reaction evidence="1">
        <text>tRNA(Sec) + L-serine + ATP = L-seryl-tRNA(Sec) + AMP + diphosphate + H(+)</text>
        <dbReference type="Rhea" id="RHEA:42580"/>
        <dbReference type="Rhea" id="RHEA-COMP:9742"/>
        <dbReference type="Rhea" id="RHEA-COMP:10128"/>
        <dbReference type="ChEBI" id="CHEBI:15378"/>
        <dbReference type="ChEBI" id="CHEBI:30616"/>
        <dbReference type="ChEBI" id="CHEBI:33019"/>
        <dbReference type="ChEBI" id="CHEBI:33384"/>
        <dbReference type="ChEBI" id="CHEBI:78442"/>
        <dbReference type="ChEBI" id="CHEBI:78533"/>
        <dbReference type="ChEBI" id="CHEBI:456215"/>
        <dbReference type="EC" id="6.1.1.11"/>
    </reaction>
</comment>
<comment type="pathway">
    <text evidence="1">Aminoacyl-tRNA biosynthesis; selenocysteinyl-tRNA(Sec) biosynthesis; L-seryl-tRNA(Sec) from L-serine and tRNA(Sec): step 1/1.</text>
</comment>
<comment type="subunit">
    <text evidence="1">Homodimer. The tRNA molecule binds across the dimer.</text>
</comment>
<comment type="subcellular location">
    <subcellularLocation>
        <location evidence="1">Cytoplasm</location>
    </subcellularLocation>
</comment>
<comment type="domain">
    <text evidence="1">Consists of two distinct domains, a catalytic core and a N-terminal extension that is involved in tRNA binding.</text>
</comment>
<comment type="similarity">
    <text evidence="1">Belongs to the class-II aminoacyl-tRNA synthetase family. Type-1 seryl-tRNA synthetase subfamily.</text>
</comment>
<evidence type="ECO:0000255" key="1">
    <source>
        <dbReference type="HAMAP-Rule" id="MF_00176"/>
    </source>
</evidence>
<keyword id="KW-0030">Aminoacyl-tRNA synthetase</keyword>
<keyword id="KW-0067">ATP-binding</keyword>
<keyword id="KW-0963">Cytoplasm</keyword>
<keyword id="KW-0436">Ligase</keyword>
<keyword id="KW-0547">Nucleotide-binding</keyword>
<keyword id="KW-0648">Protein biosynthesis</keyword>
<reference key="1">
    <citation type="journal article" date="2006" name="DNA Res.">
        <title>Genome sequence of the cat pathogen, Chlamydophila felis.</title>
        <authorList>
            <person name="Azuma Y."/>
            <person name="Hirakawa H."/>
            <person name="Yamashita A."/>
            <person name="Cai Y."/>
            <person name="Rahman M.A."/>
            <person name="Suzuki H."/>
            <person name="Mitaku S."/>
            <person name="Toh H."/>
            <person name="Goto S."/>
            <person name="Murakami T."/>
            <person name="Sugi K."/>
            <person name="Hayashi H."/>
            <person name="Fukushi H."/>
            <person name="Hattori M."/>
            <person name="Kuhara S."/>
            <person name="Shirai M."/>
        </authorList>
    </citation>
    <scope>NUCLEOTIDE SEQUENCE [LARGE SCALE GENOMIC DNA]</scope>
    <source>
        <strain>Fe/C-56</strain>
    </source>
</reference>
<dbReference type="EC" id="6.1.1.11" evidence="1"/>
<dbReference type="EMBL" id="AP006861">
    <property type="protein sequence ID" value="BAE80889.1"/>
    <property type="molecule type" value="Genomic_DNA"/>
</dbReference>
<dbReference type="RefSeq" id="WP_011457674.1">
    <property type="nucleotide sequence ID" value="NC_007899.1"/>
</dbReference>
<dbReference type="SMR" id="Q255Z9"/>
<dbReference type="STRING" id="264202.CF0117"/>
<dbReference type="KEGG" id="cfe:CF0117"/>
<dbReference type="eggNOG" id="COG0172">
    <property type="taxonomic scope" value="Bacteria"/>
</dbReference>
<dbReference type="HOGENOM" id="CLU_023797_1_1_0"/>
<dbReference type="OrthoDB" id="9804647at2"/>
<dbReference type="UniPathway" id="UPA00906">
    <property type="reaction ID" value="UER00895"/>
</dbReference>
<dbReference type="Proteomes" id="UP000001260">
    <property type="component" value="Chromosome"/>
</dbReference>
<dbReference type="GO" id="GO:0005737">
    <property type="term" value="C:cytoplasm"/>
    <property type="evidence" value="ECO:0007669"/>
    <property type="project" value="UniProtKB-SubCell"/>
</dbReference>
<dbReference type="GO" id="GO:0005524">
    <property type="term" value="F:ATP binding"/>
    <property type="evidence" value="ECO:0007669"/>
    <property type="project" value="UniProtKB-UniRule"/>
</dbReference>
<dbReference type="GO" id="GO:0004828">
    <property type="term" value="F:serine-tRNA ligase activity"/>
    <property type="evidence" value="ECO:0007669"/>
    <property type="project" value="UniProtKB-UniRule"/>
</dbReference>
<dbReference type="GO" id="GO:0016260">
    <property type="term" value="P:selenocysteine biosynthetic process"/>
    <property type="evidence" value="ECO:0007669"/>
    <property type="project" value="UniProtKB-UniRule"/>
</dbReference>
<dbReference type="GO" id="GO:0006434">
    <property type="term" value="P:seryl-tRNA aminoacylation"/>
    <property type="evidence" value="ECO:0007669"/>
    <property type="project" value="UniProtKB-UniRule"/>
</dbReference>
<dbReference type="CDD" id="cd00770">
    <property type="entry name" value="SerRS_core"/>
    <property type="match status" value="1"/>
</dbReference>
<dbReference type="Gene3D" id="3.30.930.10">
    <property type="entry name" value="Bira Bifunctional Protein, Domain 2"/>
    <property type="match status" value="1"/>
</dbReference>
<dbReference type="Gene3D" id="1.10.287.40">
    <property type="entry name" value="Serine-tRNA synthetase, tRNA binding domain"/>
    <property type="match status" value="1"/>
</dbReference>
<dbReference type="HAMAP" id="MF_00176">
    <property type="entry name" value="Ser_tRNA_synth_type1"/>
    <property type="match status" value="1"/>
</dbReference>
<dbReference type="InterPro" id="IPR002314">
    <property type="entry name" value="aa-tRNA-synt_IIb"/>
</dbReference>
<dbReference type="InterPro" id="IPR006195">
    <property type="entry name" value="aa-tRNA-synth_II"/>
</dbReference>
<dbReference type="InterPro" id="IPR045864">
    <property type="entry name" value="aa-tRNA-synth_II/BPL/LPL"/>
</dbReference>
<dbReference type="InterPro" id="IPR002317">
    <property type="entry name" value="Ser-tRNA-ligase_type_1"/>
</dbReference>
<dbReference type="InterPro" id="IPR015866">
    <property type="entry name" value="Ser-tRNA-synth_1_N"/>
</dbReference>
<dbReference type="InterPro" id="IPR042103">
    <property type="entry name" value="SerRS_1_N_sf"/>
</dbReference>
<dbReference type="InterPro" id="IPR033729">
    <property type="entry name" value="SerRS_core"/>
</dbReference>
<dbReference type="InterPro" id="IPR010978">
    <property type="entry name" value="tRNA-bd_arm"/>
</dbReference>
<dbReference type="NCBIfam" id="TIGR00414">
    <property type="entry name" value="serS"/>
    <property type="match status" value="1"/>
</dbReference>
<dbReference type="PANTHER" id="PTHR43697:SF1">
    <property type="entry name" value="SERINE--TRNA LIGASE"/>
    <property type="match status" value="1"/>
</dbReference>
<dbReference type="PANTHER" id="PTHR43697">
    <property type="entry name" value="SERYL-TRNA SYNTHETASE"/>
    <property type="match status" value="1"/>
</dbReference>
<dbReference type="Pfam" id="PF02403">
    <property type="entry name" value="Seryl_tRNA_N"/>
    <property type="match status" value="1"/>
</dbReference>
<dbReference type="Pfam" id="PF00587">
    <property type="entry name" value="tRNA-synt_2b"/>
    <property type="match status" value="1"/>
</dbReference>
<dbReference type="PIRSF" id="PIRSF001529">
    <property type="entry name" value="Ser-tRNA-synth_IIa"/>
    <property type="match status" value="1"/>
</dbReference>
<dbReference type="PRINTS" id="PR00981">
    <property type="entry name" value="TRNASYNTHSER"/>
</dbReference>
<dbReference type="SUPFAM" id="SSF55681">
    <property type="entry name" value="Class II aaRS and biotin synthetases"/>
    <property type="match status" value="1"/>
</dbReference>
<dbReference type="SUPFAM" id="SSF46589">
    <property type="entry name" value="tRNA-binding arm"/>
    <property type="match status" value="1"/>
</dbReference>
<dbReference type="PROSITE" id="PS50862">
    <property type="entry name" value="AA_TRNA_LIGASE_II"/>
    <property type="match status" value="1"/>
</dbReference>
<organism>
    <name type="scientific">Chlamydia felis (strain Fe/C-56)</name>
    <name type="common">Chlamydophila felis</name>
    <dbReference type="NCBI Taxonomy" id="264202"/>
    <lineage>
        <taxon>Bacteria</taxon>
        <taxon>Pseudomonadati</taxon>
        <taxon>Chlamydiota</taxon>
        <taxon>Chlamydiia</taxon>
        <taxon>Chlamydiales</taxon>
        <taxon>Chlamydiaceae</taxon>
        <taxon>Chlamydia/Chlamydophila group</taxon>
        <taxon>Chlamydia</taxon>
    </lineage>
</organism>
<name>SYS_CHLFF</name>
<proteinExistence type="inferred from homology"/>
<gene>
    <name evidence="1" type="primary">serS</name>
    <name type="ordered locus">CF0117</name>
</gene>
<feature type="chain" id="PRO_1000019650" description="Serine--tRNA ligase">
    <location>
        <begin position="1"/>
        <end position="426"/>
    </location>
</feature>
<feature type="binding site" evidence="1">
    <location>
        <begin position="231"/>
        <end position="233"/>
    </location>
    <ligand>
        <name>L-serine</name>
        <dbReference type="ChEBI" id="CHEBI:33384"/>
    </ligand>
</feature>
<feature type="binding site" evidence="1">
    <location>
        <begin position="262"/>
        <end position="264"/>
    </location>
    <ligand>
        <name>ATP</name>
        <dbReference type="ChEBI" id="CHEBI:30616"/>
    </ligand>
</feature>
<feature type="binding site" evidence="1">
    <location>
        <position position="278"/>
    </location>
    <ligand>
        <name>ATP</name>
        <dbReference type="ChEBI" id="CHEBI:30616"/>
    </ligand>
</feature>
<feature type="binding site" evidence="1">
    <location>
        <position position="285"/>
    </location>
    <ligand>
        <name>L-serine</name>
        <dbReference type="ChEBI" id="CHEBI:33384"/>
    </ligand>
</feature>
<feature type="binding site" evidence="1">
    <location>
        <begin position="349"/>
        <end position="352"/>
    </location>
    <ligand>
        <name>ATP</name>
        <dbReference type="ChEBI" id="CHEBI:30616"/>
    </ligand>
</feature>
<feature type="binding site" evidence="1">
    <location>
        <position position="384"/>
    </location>
    <ligand>
        <name>L-serine</name>
        <dbReference type="ChEBI" id="CHEBI:33384"/>
    </ligand>
</feature>
<protein>
    <recommendedName>
        <fullName evidence="1">Serine--tRNA ligase</fullName>
        <ecNumber evidence="1">6.1.1.11</ecNumber>
    </recommendedName>
    <alternativeName>
        <fullName evidence="1">Seryl-tRNA synthetase</fullName>
        <shortName evidence="1">SerRS</shortName>
    </alternativeName>
    <alternativeName>
        <fullName evidence="1">Seryl-tRNA(Ser/Sec) synthetase</fullName>
    </alternativeName>
</protein>
<accession>Q255Z9</accession>